<proteinExistence type="inferred from homology"/>
<keyword id="KW-0028">Amino-acid biosynthesis</keyword>
<keyword id="KW-0055">Arginine biosynthesis</keyword>
<keyword id="KW-0067">ATP-binding</keyword>
<keyword id="KW-0963">Cytoplasm</keyword>
<keyword id="KW-0436">Ligase</keyword>
<keyword id="KW-0547">Nucleotide-binding</keyword>
<keyword id="KW-1185">Reference proteome</keyword>
<accession>P63643</accession>
<accession>A0A1R3XYZ0</accession>
<accession>P94993</accession>
<accession>X2BIG1</accession>
<evidence type="ECO:0000255" key="1">
    <source>
        <dbReference type="HAMAP-Rule" id="MF_00005"/>
    </source>
</evidence>
<name>ASSY_MYCBO</name>
<dbReference type="EC" id="6.3.4.5" evidence="1"/>
<dbReference type="EMBL" id="LT708304">
    <property type="protein sequence ID" value="SIU00289.1"/>
    <property type="molecule type" value="Genomic_DNA"/>
</dbReference>
<dbReference type="RefSeq" id="NP_855338.1">
    <property type="nucleotide sequence ID" value="NC_002945.3"/>
</dbReference>
<dbReference type="RefSeq" id="WP_003408179.1">
    <property type="nucleotide sequence ID" value="NC_002945.4"/>
</dbReference>
<dbReference type="SMR" id="P63643"/>
<dbReference type="KEGG" id="mbo:BQ2027_MB1686"/>
<dbReference type="PATRIC" id="fig|233413.5.peg.1839"/>
<dbReference type="UniPathway" id="UPA00068">
    <property type="reaction ID" value="UER00113"/>
</dbReference>
<dbReference type="Proteomes" id="UP000001419">
    <property type="component" value="Chromosome"/>
</dbReference>
<dbReference type="GO" id="GO:0005737">
    <property type="term" value="C:cytoplasm"/>
    <property type="evidence" value="ECO:0007669"/>
    <property type="project" value="UniProtKB-SubCell"/>
</dbReference>
<dbReference type="GO" id="GO:0004055">
    <property type="term" value="F:argininosuccinate synthase activity"/>
    <property type="evidence" value="ECO:0007669"/>
    <property type="project" value="UniProtKB-UniRule"/>
</dbReference>
<dbReference type="GO" id="GO:0005524">
    <property type="term" value="F:ATP binding"/>
    <property type="evidence" value="ECO:0007669"/>
    <property type="project" value="UniProtKB-UniRule"/>
</dbReference>
<dbReference type="GO" id="GO:0000053">
    <property type="term" value="P:argininosuccinate metabolic process"/>
    <property type="evidence" value="ECO:0007669"/>
    <property type="project" value="TreeGrafter"/>
</dbReference>
<dbReference type="GO" id="GO:0006526">
    <property type="term" value="P:L-arginine biosynthetic process"/>
    <property type="evidence" value="ECO:0007669"/>
    <property type="project" value="UniProtKB-UniRule"/>
</dbReference>
<dbReference type="GO" id="GO:0000050">
    <property type="term" value="P:urea cycle"/>
    <property type="evidence" value="ECO:0007669"/>
    <property type="project" value="TreeGrafter"/>
</dbReference>
<dbReference type="CDD" id="cd01999">
    <property type="entry name" value="ASS"/>
    <property type="match status" value="1"/>
</dbReference>
<dbReference type="FunFam" id="3.40.50.620:FF:000038">
    <property type="entry name" value="Argininosuccinate synthase"/>
    <property type="match status" value="1"/>
</dbReference>
<dbReference type="FunFam" id="3.90.1260.10:FF:000006">
    <property type="entry name" value="Argininosuccinate synthase"/>
    <property type="match status" value="1"/>
</dbReference>
<dbReference type="Gene3D" id="3.90.1260.10">
    <property type="entry name" value="Argininosuccinate synthetase, chain A, domain 2"/>
    <property type="match status" value="1"/>
</dbReference>
<dbReference type="Gene3D" id="3.40.50.620">
    <property type="entry name" value="HUPs"/>
    <property type="match status" value="1"/>
</dbReference>
<dbReference type="Gene3D" id="1.20.5.470">
    <property type="entry name" value="Single helix bin"/>
    <property type="match status" value="1"/>
</dbReference>
<dbReference type="HAMAP" id="MF_00005">
    <property type="entry name" value="Arg_succ_synth_type1"/>
    <property type="match status" value="1"/>
</dbReference>
<dbReference type="InterPro" id="IPR048268">
    <property type="entry name" value="Arginosuc_syn_C"/>
</dbReference>
<dbReference type="InterPro" id="IPR048267">
    <property type="entry name" value="Arginosuc_syn_N"/>
</dbReference>
<dbReference type="InterPro" id="IPR001518">
    <property type="entry name" value="Arginosuc_synth"/>
</dbReference>
<dbReference type="InterPro" id="IPR018223">
    <property type="entry name" value="Arginosuc_synth_CS"/>
</dbReference>
<dbReference type="InterPro" id="IPR023434">
    <property type="entry name" value="Arginosuc_synth_type_1_subfam"/>
</dbReference>
<dbReference type="InterPro" id="IPR024074">
    <property type="entry name" value="AS_cat/multimer_dom_body"/>
</dbReference>
<dbReference type="InterPro" id="IPR014729">
    <property type="entry name" value="Rossmann-like_a/b/a_fold"/>
</dbReference>
<dbReference type="NCBIfam" id="TIGR00032">
    <property type="entry name" value="argG"/>
    <property type="match status" value="1"/>
</dbReference>
<dbReference type="NCBIfam" id="NF001770">
    <property type="entry name" value="PRK00509.1"/>
    <property type="match status" value="1"/>
</dbReference>
<dbReference type="PANTHER" id="PTHR11587">
    <property type="entry name" value="ARGININOSUCCINATE SYNTHASE"/>
    <property type="match status" value="1"/>
</dbReference>
<dbReference type="PANTHER" id="PTHR11587:SF2">
    <property type="entry name" value="ARGININOSUCCINATE SYNTHASE"/>
    <property type="match status" value="1"/>
</dbReference>
<dbReference type="Pfam" id="PF20979">
    <property type="entry name" value="Arginosuc_syn_C"/>
    <property type="match status" value="1"/>
</dbReference>
<dbReference type="Pfam" id="PF00764">
    <property type="entry name" value="Arginosuc_synth"/>
    <property type="match status" value="1"/>
</dbReference>
<dbReference type="SUPFAM" id="SSF52402">
    <property type="entry name" value="Adenine nucleotide alpha hydrolases-like"/>
    <property type="match status" value="1"/>
</dbReference>
<dbReference type="SUPFAM" id="SSF69864">
    <property type="entry name" value="Argininosuccinate synthetase, C-terminal domain"/>
    <property type="match status" value="1"/>
</dbReference>
<dbReference type="PROSITE" id="PS00564">
    <property type="entry name" value="ARGININOSUCCIN_SYN_1"/>
    <property type="match status" value="1"/>
</dbReference>
<dbReference type="PROSITE" id="PS00565">
    <property type="entry name" value="ARGININOSUCCIN_SYN_2"/>
    <property type="match status" value="1"/>
</dbReference>
<comment type="catalytic activity">
    <reaction evidence="1">
        <text>L-citrulline + L-aspartate + ATP = 2-(N(omega)-L-arginino)succinate + AMP + diphosphate + H(+)</text>
        <dbReference type="Rhea" id="RHEA:10932"/>
        <dbReference type="ChEBI" id="CHEBI:15378"/>
        <dbReference type="ChEBI" id="CHEBI:29991"/>
        <dbReference type="ChEBI" id="CHEBI:30616"/>
        <dbReference type="ChEBI" id="CHEBI:33019"/>
        <dbReference type="ChEBI" id="CHEBI:57472"/>
        <dbReference type="ChEBI" id="CHEBI:57743"/>
        <dbReference type="ChEBI" id="CHEBI:456215"/>
        <dbReference type="EC" id="6.3.4.5"/>
    </reaction>
</comment>
<comment type="pathway">
    <text evidence="1">Amino-acid biosynthesis; L-arginine biosynthesis; L-arginine from L-ornithine and carbamoyl phosphate: step 2/3.</text>
</comment>
<comment type="subunit">
    <text evidence="1">Homotetramer.</text>
</comment>
<comment type="subcellular location">
    <subcellularLocation>
        <location evidence="1">Cytoplasm</location>
    </subcellularLocation>
</comment>
<comment type="similarity">
    <text evidence="1">Belongs to the argininosuccinate synthase family. Type 1 subfamily.</text>
</comment>
<reference key="1">
    <citation type="journal article" date="2003" name="Proc. Natl. Acad. Sci. U.S.A.">
        <title>The complete genome sequence of Mycobacterium bovis.</title>
        <authorList>
            <person name="Garnier T."/>
            <person name="Eiglmeier K."/>
            <person name="Camus J.-C."/>
            <person name="Medina N."/>
            <person name="Mansoor H."/>
            <person name="Pryor M."/>
            <person name="Duthoy S."/>
            <person name="Grondin S."/>
            <person name="Lacroix C."/>
            <person name="Monsempe C."/>
            <person name="Simon S."/>
            <person name="Harris B."/>
            <person name="Atkin R."/>
            <person name="Doggett J."/>
            <person name="Mayes R."/>
            <person name="Keating L."/>
            <person name="Wheeler P.R."/>
            <person name="Parkhill J."/>
            <person name="Barrell B.G."/>
            <person name="Cole S.T."/>
            <person name="Gordon S.V."/>
            <person name="Hewinson R.G."/>
        </authorList>
    </citation>
    <scope>NUCLEOTIDE SEQUENCE [LARGE SCALE GENOMIC DNA]</scope>
    <source>
        <strain>ATCC BAA-935 / AF2122/97</strain>
    </source>
</reference>
<reference key="2">
    <citation type="journal article" date="2017" name="Genome Announc.">
        <title>Updated reference genome sequence and annotation of Mycobacterium bovis AF2122/97.</title>
        <authorList>
            <person name="Malone K.M."/>
            <person name="Farrell D."/>
            <person name="Stuber T.P."/>
            <person name="Schubert O.T."/>
            <person name="Aebersold R."/>
            <person name="Robbe-Austerman S."/>
            <person name="Gordon S.V."/>
        </authorList>
    </citation>
    <scope>NUCLEOTIDE SEQUENCE [LARGE SCALE GENOMIC DNA]</scope>
    <scope>GENOME REANNOTATION</scope>
    <source>
        <strain>ATCC BAA-935 / AF2122/97</strain>
    </source>
</reference>
<sequence length="398" mass="43682">MSERVILAYSGGLDTSVAISWIGKETGREVVAVAIDLGQGGEHMDVIRQRALDCGAVEAVVVDARDEFAEGYCLPTVLNNALYMDRYPLVSAISRPLIVKHLVAAAREHGGGIVAHGCTGKGNDQVRFEVGFASLAPDLEVLAPVRDYAWTREKAIAFAEENAIPINVTKRSPFSIDQNVWGRAVETGFLEHLWNAPTKDIYAYTEDPTINWGVPDEVIVGFERGVPVSVDGKPVSMLAAIEELNRRAGAQGVGRLDVVEDRLVGIKSREIYEAPGAMVLITAHTELEHVTLERELGRFKRQTDQRWAELVYDGLWYSPLKAALEAFVAKTQEHVSGEVRLVLHGGHIAVNGRRSAESLYDFNLATYDEGDSFDQSAARGFVYVHGLSSKLAARRDLR</sequence>
<gene>
    <name evidence="1" type="primary">argG</name>
    <name type="ordered locus">BQ2027_MB1686</name>
</gene>
<protein>
    <recommendedName>
        <fullName evidence="1">Argininosuccinate synthase</fullName>
        <ecNumber evidence="1">6.3.4.5</ecNumber>
    </recommendedName>
    <alternativeName>
        <fullName evidence="1">Citrulline--aspartate ligase</fullName>
    </alternativeName>
</protein>
<organism>
    <name type="scientific">Mycobacterium bovis (strain ATCC BAA-935 / AF2122/97)</name>
    <dbReference type="NCBI Taxonomy" id="233413"/>
    <lineage>
        <taxon>Bacteria</taxon>
        <taxon>Bacillati</taxon>
        <taxon>Actinomycetota</taxon>
        <taxon>Actinomycetes</taxon>
        <taxon>Mycobacteriales</taxon>
        <taxon>Mycobacteriaceae</taxon>
        <taxon>Mycobacterium</taxon>
        <taxon>Mycobacterium tuberculosis complex</taxon>
    </lineage>
</organism>
<feature type="chain" id="PRO_0000148617" description="Argininosuccinate synthase">
    <location>
        <begin position="1"/>
        <end position="398"/>
    </location>
</feature>
<feature type="binding site" evidence="1">
    <location>
        <begin position="8"/>
        <end position="16"/>
    </location>
    <ligand>
        <name>ATP</name>
        <dbReference type="ChEBI" id="CHEBI:30616"/>
    </ligand>
</feature>
<feature type="binding site" evidence="1">
    <location>
        <position position="87"/>
    </location>
    <ligand>
        <name>L-citrulline</name>
        <dbReference type="ChEBI" id="CHEBI:57743"/>
    </ligand>
</feature>
<feature type="binding site" evidence="1">
    <location>
        <position position="117"/>
    </location>
    <ligand>
        <name>ATP</name>
        <dbReference type="ChEBI" id="CHEBI:30616"/>
    </ligand>
</feature>
<feature type="binding site" evidence="1">
    <location>
        <position position="119"/>
    </location>
    <ligand>
        <name>L-aspartate</name>
        <dbReference type="ChEBI" id="CHEBI:29991"/>
    </ligand>
</feature>
<feature type="binding site" evidence="1">
    <location>
        <position position="123"/>
    </location>
    <ligand>
        <name>L-aspartate</name>
        <dbReference type="ChEBI" id="CHEBI:29991"/>
    </ligand>
</feature>
<feature type="binding site" evidence="1">
    <location>
        <position position="123"/>
    </location>
    <ligand>
        <name>L-citrulline</name>
        <dbReference type="ChEBI" id="CHEBI:57743"/>
    </ligand>
</feature>
<feature type="binding site" evidence="1">
    <location>
        <position position="124"/>
    </location>
    <ligand>
        <name>L-aspartate</name>
        <dbReference type="ChEBI" id="CHEBI:29991"/>
    </ligand>
</feature>
<feature type="binding site" evidence="1">
    <location>
        <position position="127"/>
    </location>
    <ligand>
        <name>L-citrulline</name>
        <dbReference type="ChEBI" id="CHEBI:57743"/>
    </ligand>
</feature>
<feature type="binding site" evidence="1">
    <location>
        <position position="175"/>
    </location>
    <ligand>
        <name>L-citrulline</name>
        <dbReference type="ChEBI" id="CHEBI:57743"/>
    </ligand>
</feature>
<feature type="binding site" evidence="1">
    <location>
        <position position="260"/>
    </location>
    <ligand>
        <name>L-citrulline</name>
        <dbReference type="ChEBI" id="CHEBI:57743"/>
    </ligand>
</feature>
<feature type="binding site" evidence="1">
    <location>
        <position position="272"/>
    </location>
    <ligand>
        <name>L-citrulline</name>
        <dbReference type="ChEBI" id="CHEBI:57743"/>
    </ligand>
</feature>